<accession>Q1HV59</accession>
<evidence type="ECO:0000250" key="1">
    <source>
        <dbReference type="UniProtKB" id="P03901"/>
    </source>
</evidence>
<evidence type="ECO:0000250" key="2">
    <source>
        <dbReference type="UniProtKB" id="P03902"/>
    </source>
</evidence>
<evidence type="ECO:0000255" key="3"/>
<evidence type="ECO:0000305" key="4"/>
<name>NU4LM_STULI</name>
<keyword id="KW-0249">Electron transport</keyword>
<keyword id="KW-0472">Membrane</keyword>
<keyword id="KW-0496">Mitochondrion</keyword>
<keyword id="KW-0999">Mitochondrion inner membrane</keyword>
<keyword id="KW-0520">NAD</keyword>
<keyword id="KW-0679">Respiratory chain</keyword>
<keyword id="KW-1278">Translocase</keyword>
<keyword id="KW-0812">Transmembrane</keyword>
<keyword id="KW-1133">Transmembrane helix</keyword>
<keyword id="KW-0813">Transport</keyword>
<keyword id="KW-0830">Ubiquinone</keyword>
<gene>
    <name type="primary">MT-ND4L</name>
    <name type="synonym">MTND4L</name>
    <name type="synonym">NADH4L</name>
    <name type="synonym">ND4L</name>
</gene>
<organism>
    <name type="scientific">Sturnira lilium</name>
    <name type="common">Lesser yellow-shouldered bat</name>
    <dbReference type="NCBI Taxonomy" id="27660"/>
    <lineage>
        <taxon>Eukaryota</taxon>
        <taxon>Metazoa</taxon>
        <taxon>Chordata</taxon>
        <taxon>Craniata</taxon>
        <taxon>Vertebrata</taxon>
        <taxon>Euteleostomi</taxon>
        <taxon>Mammalia</taxon>
        <taxon>Eutheria</taxon>
        <taxon>Laurasiatheria</taxon>
        <taxon>Chiroptera</taxon>
        <taxon>Yangochiroptera</taxon>
        <taxon>Phyllostomidae</taxon>
        <taxon>Stenodermatinae</taxon>
        <taxon>Sturnira</taxon>
    </lineage>
</organism>
<dbReference type="EC" id="7.1.1.2"/>
<dbReference type="EMBL" id="DQ312362">
    <property type="protein sequence ID" value="ABC47502.1"/>
    <property type="molecule type" value="Genomic_DNA"/>
</dbReference>
<dbReference type="SMR" id="Q1HV59"/>
<dbReference type="GO" id="GO:0005743">
    <property type="term" value="C:mitochondrial inner membrane"/>
    <property type="evidence" value="ECO:0000250"/>
    <property type="project" value="UniProtKB"/>
</dbReference>
<dbReference type="GO" id="GO:0045271">
    <property type="term" value="C:respiratory chain complex I"/>
    <property type="evidence" value="ECO:0000250"/>
    <property type="project" value="UniProtKB"/>
</dbReference>
<dbReference type="GO" id="GO:0008137">
    <property type="term" value="F:NADH dehydrogenase (ubiquinone) activity"/>
    <property type="evidence" value="ECO:0000250"/>
    <property type="project" value="UniProtKB"/>
</dbReference>
<dbReference type="GO" id="GO:0042773">
    <property type="term" value="P:ATP synthesis coupled electron transport"/>
    <property type="evidence" value="ECO:0007669"/>
    <property type="project" value="InterPro"/>
</dbReference>
<dbReference type="FunFam" id="1.10.287.3510:FF:000002">
    <property type="entry name" value="NADH-ubiquinone oxidoreductase chain 4L"/>
    <property type="match status" value="1"/>
</dbReference>
<dbReference type="Gene3D" id="1.10.287.3510">
    <property type="match status" value="1"/>
</dbReference>
<dbReference type="InterPro" id="IPR001133">
    <property type="entry name" value="NADH_UbQ_OxRdtase_chain4L/K"/>
</dbReference>
<dbReference type="InterPro" id="IPR039428">
    <property type="entry name" value="NUOK/Mnh_C1-like"/>
</dbReference>
<dbReference type="PANTHER" id="PTHR11434:SF0">
    <property type="entry name" value="NADH-UBIQUINONE OXIDOREDUCTASE CHAIN 4L"/>
    <property type="match status" value="1"/>
</dbReference>
<dbReference type="PANTHER" id="PTHR11434">
    <property type="entry name" value="NADH-UBIQUINONE OXIDOREDUCTASE SUBUNIT ND4L"/>
    <property type="match status" value="1"/>
</dbReference>
<dbReference type="Pfam" id="PF00420">
    <property type="entry name" value="Oxidored_q2"/>
    <property type="match status" value="1"/>
</dbReference>
<sequence>MSLTYMNMLLAFMISLMGLLMYRSHMMSSLLCLEGMMLSLFVMMTVTILNTHMTLASMLPIILLVFAACEAALGLSLLVMVSTTYGMDYVQNLNLLQC</sequence>
<proteinExistence type="inferred from homology"/>
<protein>
    <recommendedName>
        <fullName>NADH-ubiquinone oxidoreductase chain 4L</fullName>
        <ecNumber>7.1.1.2</ecNumber>
    </recommendedName>
    <alternativeName>
        <fullName>NADH dehydrogenase subunit 4L</fullName>
    </alternativeName>
</protein>
<feature type="chain" id="PRO_0000275126" description="NADH-ubiquinone oxidoreductase chain 4L">
    <location>
        <begin position="1"/>
        <end position="98"/>
    </location>
</feature>
<feature type="transmembrane region" description="Helical" evidence="3">
    <location>
        <begin position="1"/>
        <end position="21"/>
    </location>
</feature>
<feature type="transmembrane region" description="Helical" evidence="3">
    <location>
        <begin position="29"/>
        <end position="49"/>
    </location>
</feature>
<feature type="transmembrane region" description="Helical" evidence="3">
    <location>
        <begin position="61"/>
        <end position="81"/>
    </location>
</feature>
<reference key="1">
    <citation type="journal article" date="2006" name="Mol. Phylogenet. Evol.">
        <title>Molecular systematics of Vampyressine bats (Phyllostomidae: Stenodermatinae) with comparison of direct and indirect surveys of mitochondrial DNA variation.</title>
        <authorList>
            <person name="Hoofer S.R."/>
            <person name="Baker R.J."/>
        </authorList>
    </citation>
    <scope>NUCLEOTIDE SEQUENCE [GENOMIC DNA]</scope>
</reference>
<geneLocation type="mitochondrion"/>
<comment type="function">
    <text evidence="1">Core subunit of the mitochondrial membrane respiratory chain NADH dehydrogenase (Complex I) which catalyzes electron transfer from NADH through the respiratory chain, using ubiquinone as an electron acceptor. Part of the enzyme membrane arm which is embedded in the lipid bilayer and involved in proton translocation.</text>
</comment>
<comment type="catalytic activity">
    <reaction evidence="1">
        <text>a ubiquinone + NADH + 5 H(+)(in) = a ubiquinol + NAD(+) + 4 H(+)(out)</text>
        <dbReference type="Rhea" id="RHEA:29091"/>
        <dbReference type="Rhea" id="RHEA-COMP:9565"/>
        <dbReference type="Rhea" id="RHEA-COMP:9566"/>
        <dbReference type="ChEBI" id="CHEBI:15378"/>
        <dbReference type="ChEBI" id="CHEBI:16389"/>
        <dbReference type="ChEBI" id="CHEBI:17976"/>
        <dbReference type="ChEBI" id="CHEBI:57540"/>
        <dbReference type="ChEBI" id="CHEBI:57945"/>
        <dbReference type="EC" id="7.1.1.2"/>
    </reaction>
    <physiologicalReaction direction="left-to-right" evidence="1">
        <dbReference type="Rhea" id="RHEA:29092"/>
    </physiologicalReaction>
</comment>
<comment type="subunit">
    <text evidence="2">Core subunit of respiratory chain NADH dehydrogenase (Complex I) which is composed of 45 different subunits.</text>
</comment>
<comment type="subcellular location">
    <subcellularLocation>
        <location evidence="2">Mitochondrion inner membrane</location>
        <topology evidence="3">Multi-pass membrane protein</topology>
    </subcellularLocation>
</comment>
<comment type="similarity">
    <text evidence="4">Belongs to the complex I subunit 4L family.</text>
</comment>